<feature type="chain" id="PRO_0000262972" description="Putative ribose/galactose/methyl galactoside import ATP-binding protein 3">
    <location>
        <begin position="1"/>
        <end position="499"/>
    </location>
</feature>
<feature type="domain" description="ABC transporter 1" evidence="1">
    <location>
        <begin position="8"/>
        <end position="243"/>
    </location>
</feature>
<feature type="domain" description="ABC transporter 2" evidence="1">
    <location>
        <begin position="253"/>
        <end position="497"/>
    </location>
</feature>
<feature type="binding site" evidence="1">
    <location>
        <begin position="40"/>
        <end position="47"/>
    </location>
    <ligand>
        <name>ATP</name>
        <dbReference type="ChEBI" id="CHEBI:30616"/>
    </ligand>
</feature>
<protein>
    <recommendedName>
        <fullName evidence="1">Putative ribose/galactose/methyl galactoside import ATP-binding protein 3</fullName>
        <ecNumber evidence="1">7.5.2.11</ecNumber>
        <ecNumber evidence="1">7.5.2.7</ecNumber>
    </recommendedName>
</protein>
<accession>Q8U9B0</accession>
<accession>Q7CTE0</accession>
<name>RGMG3_AGRFC</name>
<proteinExistence type="inferred from homology"/>
<gene>
    <name type="ordered locus">Atu3818</name>
    <name type="ORF">AGR_L_2027</name>
</gene>
<reference key="1">
    <citation type="journal article" date="2001" name="Science">
        <title>The genome of the natural genetic engineer Agrobacterium tumefaciens C58.</title>
        <authorList>
            <person name="Wood D.W."/>
            <person name="Setubal J.C."/>
            <person name="Kaul R."/>
            <person name="Monks D.E."/>
            <person name="Kitajima J.P."/>
            <person name="Okura V.K."/>
            <person name="Zhou Y."/>
            <person name="Chen L."/>
            <person name="Wood G.E."/>
            <person name="Almeida N.F. Jr."/>
            <person name="Woo L."/>
            <person name="Chen Y."/>
            <person name="Paulsen I.T."/>
            <person name="Eisen J.A."/>
            <person name="Karp P.D."/>
            <person name="Bovee D. Sr."/>
            <person name="Chapman P."/>
            <person name="Clendenning J."/>
            <person name="Deatherage G."/>
            <person name="Gillet W."/>
            <person name="Grant C."/>
            <person name="Kutyavin T."/>
            <person name="Levy R."/>
            <person name="Li M.-J."/>
            <person name="McClelland E."/>
            <person name="Palmieri A."/>
            <person name="Raymond C."/>
            <person name="Rouse G."/>
            <person name="Saenphimmachak C."/>
            <person name="Wu Z."/>
            <person name="Romero P."/>
            <person name="Gordon D."/>
            <person name="Zhang S."/>
            <person name="Yoo H."/>
            <person name="Tao Y."/>
            <person name="Biddle P."/>
            <person name="Jung M."/>
            <person name="Krespan W."/>
            <person name="Perry M."/>
            <person name="Gordon-Kamm B."/>
            <person name="Liao L."/>
            <person name="Kim S."/>
            <person name="Hendrick C."/>
            <person name="Zhao Z.-Y."/>
            <person name="Dolan M."/>
            <person name="Chumley F."/>
            <person name="Tingey S.V."/>
            <person name="Tomb J.-F."/>
            <person name="Gordon M.P."/>
            <person name="Olson M.V."/>
            <person name="Nester E.W."/>
        </authorList>
    </citation>
    <scope>NUCLEOTIDE SEQUENCE [LARGE SCALE GENOMIC DNA]</scope>
    <source>
        <strain>C58 / ATCC 33970</strain>
    </source>
</reference>
<reference key="2">
    <citation type="journal article" date="2001" name="Science">
        <title>Genome sequence of the plant pathogen and biotechnology agent Agrobacterium tumefaciens C58.</title>
        <authorList>
            <person name="Goodner B."/>
            <person name="Hinkle G."/>
            <person name="Gattung S."/>
            <person name="Miller N."/>
            <person name="Blanchard M."/>
            <person name="Qurollo B."/>
            <person name="Goldman B.S."/>
            <person name="Cao Y."/>
            <person name="Askenazi M."/>
            <person name="Halling C."/>
            <person name="Mullin L."/>
            <person name="Houmiel K."/>
            <person name="Gordon J."/>
            <person name="Vaudin M."/>
            <person name="Iartchouk O."/>
            <person name="Epp A."/>
            <person name="Liu F."/>
            <person name="Wollam C."/>
            <person name="Allinger M."/>
            <person name="Doughty D."/>
            <person name="Scott C."/>
            <person name="Lappas C."/>
            <person name="Markelz B."/>
            <person name="Flanagan C."/>
            <person name="Crowell C."/>
            <person name="Gurson J."/>
            <person name="Lomo C."/>
            <person name="Sear C."/>
            <person name="Strub G."/>
            <person name="Cielo C."/>
            <person name="Slater S."/>
        </authorList>
    </citation>
    <scope>NUCLEOTIDE SEQUENCE [LARGE SCALE GENOMIC DNA]</scope>
    <source>
        <strain>C58 / ATCC 33970</strain>
    </source>
</reference>
<dbReference type="EC" id="7.5.2.11" evidence="1"/>
<dbReference type="EC" id="7.5.2.7" evidence="1"/>
<dbReference type="EMBL" id="AE007870">
    <property type="protein sequence ID" value="AAK89589.2"/>
    <property type="molecule type" value="Genomic_DNA"/>
</dbReference>
<dbReference type="PIR" id="AF3026">
    <property type="entry name" value="AF3026"/>
</dbReference>
<dbReference type="PIR" id="C98258">
    <property type="entry name" value="C98258"/>
</dbReference>
<dbReference type="RefSeq" id="NP_356804.2">
    <property type="nucleotide sequence ID" value="NC_003063.2"/>
</dbReference>
<dbReference type="RefSeq" id="WP_010973344.1">
    <property type="nucleotide sequence ID" value="NC_003063.2"/>
</dbReference>
<dbReference type="SMR" id="Q8U9B0"/>
<dbReference type="STRING" id="176299.Atu3818"/>
<dbReference type="EnsemblBacteria" id="AAK89589">
    <property type="protein sequence ID" value="AAK89589"/>
    <property type="gene ID" value="Atu3818"/>
</dbReference>
<dbReference type="GeneID" id="1135692"/>
<dbReference type="KEGG" id="atu:Atu3818"/>
<dbReference type="PATRIC" id="fig|176299.10.peg.3659"/>
<dbReference type="eggNOG" id="COG1129">
    <property type="taxonomic scope" value="Bacteria"/>
</dbReference>
<dbReference type="HOGENOM" id="CLU_000604_92_3_5"/>
<dbReference type="OrthoDB" id="9805029at2"/>
<dbReference type="PhylomeDB" id="Q8U9B0"/>
<dbReference type="BioCyc" id="AGRO:ATU3818-MONOMER"/>
<dbReference type="Proteomes" id="UP000000813">
    <property type="component" value="Chromosome linear"/>
</dbReference>
<dbReference type="GO" id="GO:0005886">
    <property type="term" value="C:plasma membrane"/>
    <property type="evidence" value="ECO:0007669"/>
    <property type="project" value="UniProtKB-SubCell"/>
</dbReference>
<dbReference type="GO" id="GO:0015611">
    <property type="term" value="F:ABC-type D-ribose transporter activity"/>
    <property type="evidence" value="ECO:0007669"/>
    <property type="project" value="UniProtKB-EC"/>
</dbReference>
<dbReference type="GO" id="GO:0005524">
    <property type="term" value="F:ATP binding"/>
    <property type="evidence" value="ECO:0007669"/>
    <property type="project" value="UniProtKB-KW"/>
</dbReference>
<dbReference type="GO" id="GO:0016887">
    <property type="term" value="F:ATP hydrolysis activity"/>
    <property type="evidence" value="ECO:0007669"/>
    <property type="project" value="InterPro"/>
</dbReference>
<dbReference type="CDD" id="cd03216">
    <property type="entry name" value="ABC_Carb_Monos_I"/>
    <property type="match status" value="1"/>
</dbReference>
<dbReference type="CDD" id="cd03215">
    <property type="entry name" value="ABC_Carb_Monos_II"/>
    <property type="match status" value="1"/>
</dbReference>
<dbReference type="FunFam" id="3.40.50.300:FF:000127">
    <property type="entry name" value="Ribose import ATP-binding protein RbsA"/>
    <property type="match status" value="1"/>
</dbReference>
<dbReference type="Gene3D" id="3.40.50.300">
    <property type="entry name" value="P-loop containing nucleotide triphosphate hydrolases"/>
    <property type="match status" value="2"/>
</dbReference>
<dbReference type="InterPro" id="IPR003593">
    <property type="entry name" value="AAA+_ATPase"/>
</dbReference>
<dbReference type="InterPro" id="IPR050107">
    <property type="entry name" value="ABC_carbohydrate_import_ATPase"/>
</dbReference>
<dbReference type="InterPro" id="IPR003439">
    <property type="entry name" value="ABC_transporter-like_ATP-bd"/>
</dbReference>
<dbReference type="InterPro" id="IPR017871">
    <property type="entry name" value="ABC_transporter-like_CS"/>
</dbReference>
<dbReference type="InterPro" id="IPR027417">
    <property type="entry name" value="P-loop_NTPase"/>
</dbReference>
<dbReference type="PANTHER" id="PTHR43790">
    <property type="entry name" value="CARBOHYDRATE TRANSPORT ATP-BINDING PROTEIN MG119-RELATED"/>
    <property type="match status" value="1"/>
</dbReference>
<dbReference type="PANTHER" id="PTHR43790:SF3">
    <property type="entry name" value="D-ALLOSE IMPORT ATP-BINDING PROTEIN ALSA-RELATED"/>
    <property type="match status" value="1"/>
</dbReference>
<dbReference type="Pfam" id="PF00005">
    <property type="entry name" value="ABC_tran"/>
    <property type="match status" value="2"/>
</dbReference>
<dbReference type="SMART" id="SM00382">
    <property type="entry name" value="AAA"/>
    <property type="match status" value="2"/>
</dbReference>
<dbReference type="SUPFAM" id="SSF52540">
    <property type="entry name" value="P-loop containing nucleoside triphosphate hydrolases"/>
    <property type="match status" value="2"/>
</dbReference>
<dbReference type="PROSITE" id="PS00211">
    <property type="entry name" value="ABC_TRANSPORTER_1"/>
    <property type="match status" value="1"/>
</dbReference>
<dbReference type="PROSITE" id="PS50893">
    <property type="entry name" value="ABC_TRANSPORTER_2"/>
    <property type="match status" value="2"/>
</dbReference>
<dbReference type="PROSITE" id="PS51260">
    <property type="entry name" value="MGLA"/>
    <property type="match status" value="1"/>
</dbReference>
<dbReference type="PROSITE" id="PS51254">
    <property type="entry name" value="RBSA"/>
    <property type="match status" value="1"/>
</dbReference>
<evidence type="ECO:0000255" key="1">
    <source>
        <dbReference type="HAMAP-Rule" id="MF_01717"/>
    </source>
</evidence>
<comment type="function">
    <text evidence="1">Part of an ABC transporter complex involved in carbohydrate import. Could be involved in ribose, galactose and/or methyl galactoside import. Responsible for energy coupling to the transport system.</text>
</comment>
<comment type="catalytic activity">
    <reaction evidence="1">
        <text>D-ribose(out) + ATP + H2O = D-ribose(in) + ADP + phosphate + H(+)</text>
        <dbReference type="Rhea" id="RHEA:29903"/>
        <dbReference type="ChEBI" id="CHEBI:15377"/>
        <dbReference type="ChEBI" id="CHEBI:15378"/>
        <dbReference type="ChEBI" id="CHEBI:30616"/>
        <dbReference type="ChEBI" id="CHEBI:43474"/>
        <dbReference type="ChEBI" id="CHEBI:47013"/>
        <dbReference type="ChEBI" id="CHEBI:456216"/>
        <dbReference type="EC" id="7.5.2.7"/>
    </reaction>
</comment>
<comment type="catalytic activity">
    <reaction evidence="1">
        <text>D-galactose(out) + ATP + H2O = D-galactose(in) + ADP + phosphate + H(+)</text>
        <dbReference type="Rhea" id="RHEA:60156"/>
        <dbReference type="ChEBI" id="CHEBI:4139"/>
        <dbReference type="ChEBI" id="CHEBI:15377"/>
        <dbReference type="ChEBI" id="CHEBI:15378"/>
        <dbReference type="ChEBI" id="CHEBI:30616"/>
        <dbReference type="ChEBI" id="CHEBI:43474"/>
        <dbReference type="ChEBI" id="CHEBI:456216"/>
        <dbReference type="EC" id="7.5.2.11"/>
    </reaction>
</comment>
<comment type="subcellular location">
    <subcellularLocation>
        <location evidence="1">Cell inner membrane</location>
        <topology evidence="1">Peripheral membrane protein</topology>
    </subcellularLocation>
</comment>
<comment type="similarity">
    <text evidence="1">Belongs to the ABC transporter superfamily. Carbohydrate importer 2 (CUT2) (TC 3.A.1.2) family.</text>
</comment>
<organism>
    <name type="scientific">Agrobacterium fabrum (strain C58 / ATCC 33970)</name>
    <name type="common">Agrobacterium tumefaciens (strain C58)</name>
    <dbReference type="NCBI Taxonomy" id="176299"/>
    <lineage>
        <taxon>Bacteria</taxon>
        <taxon>Pseudomonadati</taxon>
        <taxon>Pseudomonadota</taxon>
        <taxon>Alphaproteobacteria</taxon>
        <taxon>Hyphomicrobiales</taxon>
        <taxon>Rhizobiaceae</taxon>
        <taxon>Rhizobium/Agrobacterium group</taxon>
        <taxon>Agrobacterium</taxon>
        <taxon>Agrobacterium tumefaciens complex</taxon>
    </lineage>
</organism>
<sequence>MTATASALRMRGISKIFPGVKALSNVNFTVEYGRIHAVVGENGAGKSTLMKILSGSYAPTTGTTEIAGVEVQMRRPADAQKLGIRMVHQELNLVPDLTVAENIYLGRMPHRRFLVDRQAMLRKAAAVLKELEAAIDPKARLGDLPISQQQLVEIAKSYSADPRIIVLDEPTSSLSEHETTALFSILRKMKSQGIAIIYISHRLKEVLDIADDVTILRDGSMIDTRPAAGITAAEMIRLMVGREVANVFPKTPSKIGPVAFKVTGLSDGEKFHDVGFDVRSGEILGLTGLVGAGRTEVAQAIFGLAPLATGRIEINGKAVTIGSPAAAVKAGVAYVPEDRKGDGIVPSMSVRENISLPVLRRLSRLGRIGMSRDRGLAAKYTRDFSIVPPDPERRINLLSGGNQQKAIISRWLAAGPKVLILDEPTRGVDVGAKAEIHRIIGELVAGGMAVVMISSELPEVMGVCDRVVVMRDGRASSPIARGDLTEERIMALATGEEPA</sequence>
<keyword id="KW-0067">ATP-binding</keyword>
<keyword id="KW-0997">Cell inner membrane</keyword>
<keyword id="KW-1003">Cell membrane</keyword>
<keyword id="KW-0472">Membrane</keyword>
<keyword id="KW-0547">Nucleotide-binding</keyword>
<keyword id="KW-1185">Reference proteome</keyword>
<keyword id="KW-0677">Repeat</keyword>
<keyword id="KW-0762">Sugar transport</keyword>
<keyword id="KW-1278">Translocase</keyword>
<keyword id="KW-0813">Transport</keyword>